<reference key="1">
    <citation type="journal article" date="2004" name="Mol. Biochem. Parasitol.">
        <title>Characterization of primate trypanosome lytic factors.</title>
        <authorList>
            <person name="Lugli E.B."/>
            <person name="Pouliot M."/>
            <person name="Molina Portela M.P."/>
            <person name="Loomis M.R."/>
            <person name="Raper J."/>
        </authorList>
    </citation>
    <scope>NUCLEOTIDE SEQUENCE [MRNA]</scope>
</reference>
<dbReference type="EMBL" id="AY555147">
    <property type="protein sequence ID" value="AAT37513.1"/>
    <property type="molecule type" value="mRNA"/>
</dbReference>
<dbReference type="SMR" id="Q5VAN1"/>
<dbReference type="GlyCosmos" id="Q5VAN1">
    <property type="glycosylation" value="5 sites, No reported glycans"/>
</dbReference>
<dbReference type="GO" id="GO:0072562">
    <property type="term" value="C:blood microparticle"/>
    <property type="evidence" value="ECO:0007669"/>
    <property type="project" value="TreeGrafter"/>
</dbReference>
<dbReference type="GO" id="GO:0016209">
    <property type="term" value="F:antioxidant activity"/>
    <property type="evidence" value="ECO:0007669"/>
    <property type="project" value="UniProtKB-KW"/>
</dbReference>
<dbReference type="GO" id="GO:0030492">
    <property type="term" value="F:hemoglobin binding"/>
    <property type="evidence" value="ECO:0007669"/>
    <property type="project" value="UniProtKB-KW"/>
</dbReference>
<dbReference type="GO" id="GO:0006953">
    <property type="term" value="P:acute-phase response"/>
    <property type="evidence" value="ECO:0007669"/>
    <property type="project" value="UniProtKB-KW"/>
</dbReference>
<dbReference type="GO" id="GO:0042742">
    <property type="term" value="P:defense response to bacterium"/>
    <property type="evidence" value="ECO:0007669"/>
    <property type="project" value="UniProtKB-KW"/>
</dbReference>
<dbReference type="GO" id="GO:0002376">
    <property type="term" value="P:immune system process"/>
    <property type="evidence" value="ECO:0007669"/>
    <property type="project" value="UniProtKB-KW"/>
</dbReference>
<dbReference type="CDD" id="cd00033">
    <property type="entry name" value="CCP"/>
    <property type="match status" value="1"/>
</dbReference>
<dbReference type="CDD" id="cd00190">
    <property type="entry name" value="Tryp_SPc"/>
    <property type="match status" value="1"/>
</dbReference>
<dbReference type="FunFam" id="2.10.70.10:FF:000048">
    <property type="entry name" value="Haptoglobin"/>
    <property type="match status" value="1"/>
</dbReference>
<dbReference type="FunFam" id="2.40.10.10:FF:000027">
    <property type="entry name" value="Haptoglobin"/>
    <property type="match status" value="1"/>
</dbReference>
<dbReference type="FunFam" id="2.40.10.10:FF:000031">
    <property type="entry name" value="Haptoglobin"/>
    <property type="match status" value="1"/>
</dbReference>
<dbReference type="Gene3D" id="2.10.70.10">
    <property type="entry name" value="Complement Module, domain 1"/>
    <property type="match status" value="1"/>
</dbReference>
<dbReference type="Gene3D" id="2.40.10.10">
    <property type="entry name" value="Trypsin-like serine proteases"/>
    <property type="match status" value="2"/>
</dbReference>
<dbReference type="InterPro" id="IPR008292">
    <property type="entry name" value="Haptoglobin"/>
</dbReference>
<dbReference type="InterPro" id="IPR009003">
    <property type="entry name" value="Peptidase_S1_PA"/>
</dbReference>
<dbReference type="InterPro" id="IPR043504">
    <property type="entry name" value="Peptidase_S1_PA_chymotrypsin"/>
</dbReference>
<dbReference type="InterPro" id="IPR001314">
    <property type="entry name" value="Peptidase_S1A"/>
</dbReference>
<dbReference type="InterPro" id="IPR035976">
    <property type="entry name" value="Sushi/SCR/CCP_sf"/>
</dbReference>
<dbReference type="InterPro" id="IPR000436">
    <property type="entry name" value="Sushi_SCR_CCP_dom"/>
</dbReference>
<dbReference type="InterPro" id="IPR001254">
    <property type="entry name" value="Trypsin_dom"/>
</dbReference>
<dbReference type="PANTHER" id="PTHR24255">
    <property type="entry name" value="COMPLEMENT COMPONENT 1, S SUBCOMPONENT-RELATED"/>
    <property type="match status" value="1"/>
</dbReference>
<dbReference type="PANTHER" id="PTHR24255:SF27">
    <property type="entry name" value="HAPTOGLOBIN-RELATED PROTEIN"/>
    <property type="match status" value="1"/>
</dbReference>
<dbReference type="Pfam" id="PF00089">
    <property type="entry name" value="Trypsin"/>
    <property type="match status" value="1"/>
</dbReference>
<dbReference type="PIRSF" id="PIRSF001137">
    <property type="entry name" value="Haptoglobin"/>
    <property type="match status" value="1"/>
</dbReference>
<dbReference type="PRINTS" id="PR00722">
    <property type="entry name" value="CHYMOTRYPSIN"/>
</dbReference>
<dbReference type="SMART" id="SM00020">
    <property type="entry name" value="Tryp_SPc"/>
    <property type="match status" value="1"/>
</dbReference>
<dbReference type="SUPFAM" id="SSF57535">
    <property type="entry name" value="Complement control module/SCR domain"/>
    <property type="match status" value="1"/>
</dbReference>
<dbReference type="SUPFAM" id="SSF50494">
    <property type="entry name" value="Trypsin-like serine proteases"/>
    <property type="match status" value="1"/>
</dbReference>
<dbReference type="PROSITE" id="PS50923">
    <property type="entry name" value="SUSHI"/>
    <property type="match status" value="1"/>
</dbReference>
<dbReference type="PROSITE" id="PS50240">
    <property type="entry name" value="TRYPSIN_DOM"/>
    <property type="match status" value="1"/>
</dbReference>
<name>HPT_PAPHA</name>
<evidence type="ECO:0000250" key="1"/>
<evidence type="ECO:0000250" key="2">
    <source>
        <dbReference type="UniProtKB" id="P00738"/>
    </source>
</evidence>
<evidence type="ECO:0000250" key="3">
    <source>
        <dbReference type="UniProtKB" id="Q8SPS7"/>
    </source>
</evidence>
<evidence type="ECO:0000255" key="4"/>
<evidence type="ECO:0000255" key="5">
    <source>
        <dbReference type="PROSITE-ProRule" id="PRU00274"/>
    </source>
</evidence>
<evidence type="ECO:0000255" key="6">
    <source>
        <dbReference type="PROSITE-ProRule" id="PRU00302"/>
    </source>
</evidence>
<evidence type="ECO:0000305" key="7"/>
<keyword id="KW-0011">Acute phase</keyword>
<keyword id="KW-0044">Antibiotic</keyword>
<keyword id="KW-0929">Antimicrobial</keyword>
<keyword id="KW-0049">Antioxidant</keyword>
<keyword id="KW-1015">Disulfide bond</keyword>
<keyword id="KW-0325">Glycoprotein</keyword>
<keyword id="KW-0351">Hemoglobin-binding</keyword>
<keyword id="KW-0391">Immunity</keyword>
<keyword id="KW-0964">Secreted</keyword>
<keyword id="KW-0721">Serine protease homolog</keyword>
<keyword id="KW-0732">Signal</keyword>
<keyword id="KW-0768">Sushi</keyword>
<proteinExistence type="evidence at transcript level"/>
<gene>
    <name type="primary">HP</name>
</gene>
<comment type="function">
    <text evidence="1">As a result of hemolysis, hemoglobin is found to accumulate in the kidney and is secreted in the urine. Haptoglobin captures, and combines with free plasma hemoglobin to allow hepatic recycling of heme iron and to prevent kidney damage. Haptoglobin also acts as an antioxidant, has antibacterial activity and plays a role in modulating many aspects of the acute phase response. Hemoglobin/haptoglobin complexes are rapidly cleared by the macrophage CD163 scavenger receptor expressed on the surface of liver Kupfer cells through an endocytic lysosomal degradation pathway (By similarity).</text>
</comment>
<comment type="subunit">
    <text evidence="2 3">Tetramer of two alpha and two beta chains; disulfide-linked (By similarity). The hemoglobin/haptoglobin complex is composed of a haptoglobin dimer bound to two hemoglobin alpha-beta dimers (By similarity). Interacts with CD163 (By similarity). Interacts with ERGIC3 (By similarity).</text>
</comment>
<comment type="subcellular location">
    <subcellularLocation>
        <location evidence="1">Secreted</location>
    </subcellularLocation>
</comment>
<comment type="tissue specificity">
    <text>Expressed by the liver and secreted in plasma.</text>
</comment>
<comment type="domain">
    <text evidence="1">The beta chain mediates most of the interactions with both subunits of hemoglobin, while the alpha chain forms the homodimeric interface.</text>
</comment>
<comment type="similarity">
    <text evidence="5">Belongs to the peptidase S1 family.</text>
</comment>
<comment type="caution">
    <text evidence="7">Although homologous to serine proteases, it has lost all essential catalytic residues and has no enzymatic activity.</text>
</comment>
<protein>
    <recommendedName>
        <fullName>Haptoglobin</fullName>
    </recommendedName>
    <component>
        <recommendedName>
            <fullName>Haptoglobin alpha chain</fullName>
        </recommendedName>
    </component>
    <component>
        <recommendedName>
            <fullName>Haptoglobin beta chain</fullName>
        </recommendedName>
    </component>
</protein>
<sequence>MSDLGAVVALLLWGQLFAVDSGNDVTDIADDGCPKPPMIANGYVEHLVRYQCKNYYRLRTEGDGVYTLNNEKQWTNKAVGDKLPECEAVCGKPKNPADAVQRILGGHLDAKGSFPWQAKMVSRHNLTTGATLINEQWLLTTAKNLFLNHSENATAKDIAPTLTLYVGKKQLVEIEKVVLYPNYSQIDIGLIKLKQKVPVNERVMPICLPSKDYAEVGRVGYVSGWGRNANFNFTDHLKYVMLPVADQYDCIKHYEGSTVPEKKTPKSPVGEQPILNEHTFCAGMSKYQEDTCYGDAGSAFAVHDLEKDTWYAAGILSFDKSCGVAEYGVYVKATSIQDWVQKTIAEN</sequence>
<accession>Q5VAN1</accession>
<organism>
    <name type="scientific">Papio hamadryas</name>
    <name type="common">Hamadryas baboon</name>
    <dbReference type="NCBI Taxonomy" id="9557"/>
    <lineage>
        <taxon>Eukaryota</taxon>
        <taxon>Metazoa</taxon>
        <taxon>Chordata</taxon>
        <taxon>Craniata</taxon>
        <taxon>Vertebrata</taxon>
        <taxon>Euteleostomi</taxon>
        <taxon>Mammalia</taxon>
        <taxon>Eutheria</taxon>
        <taxon>Euarchontoglires</taxon>
        <taxon>Primates</taxon>
        <taxon>Haplorrhini</taxon>
        <taxon>Catarrhini</taxon>
        <taxon>Cercopithecidae</taxon>
        <taxon>Cercopithecinae</taxon>
        <taxon>Papio</taxon>
    </lineage>
</organism>
<feature type="signal peptide" evidence="1">
    <location>
        <begin position="1"/>
        <end position="18"/>
    </location>
</feature>
<feature type="chain" id="PRO_0000028471" description="Haptoglobin">
    <location>
        <begin position="19"/>
        <end position="347"/>
    </location>
</feature>
<feature type="chain" id="PRO_0000028472" description="Haptoglobin alpha chain">
    <location>
        <begin position="19"/>
        <end position="101"/>
    </location>
</feature>
<feature type="chain" id="PRO_0000028473" description="Haptoglobin beta chain">
    <location>
        <begin position="103"/>
        <end position="347"/>
    </location>
</feature>
<feature type="domain" description="Sushi" evidence="6">
    <location>
        <begin position="31"/>
        <end position="88"/>
    </location>
</feature>
<feature type="region of interest" description="Serine protease">
    <location>
        <begin position="103"/>
        <end position="347"/>
    </location>
</feature>
<feature type="region of interest" description="Interaction with CD163" evidence="1">
    <location>
        <begin position="259"/>
        <end position="264"/>
    </location>
</feature>
<feature type="glycosylation site" description="N-linked (GlcNAc...) asparagine" evidence="4">
    <location>
        <position position="125"/>
    </location>
</feature>
<feature type="glycosylation site" description="N-linked (GlcNAc...) asparagine" evidence="4">
    <location>
        <position position="148"/>
    </location>
</feature>
<feature type="glycosylation site" description="N-linked (GlcNAc...) asparagine" evidence="4">
    <location>
        <position position="152"/>
    </location>
</feature>
<feature type="glycosylation site" description="N-linked (GlcNAc...) asparagine" evidence="4">
    <location>
        <position position="182"/>
    </location>
</feature>
<feature type="glycosylation site" description="N-linked (GlcNAc...) asparagine" evidence="4">
    <location>
        <position position="232"/>
    </location>
</feature>
<feature type="disulfide bond" description="Interchain" evidence="1">
    <location>
        <position position="33"/>
    </location>
</feature>
<feature type="disulfide bond" evidence="1">
    <location>
        <begin position="52"/>
        <end position="86"/>
    </location>
</feature>
<feature type="disulfide bond" description="Interchain (between alpha and beta chains)" evidence="5 6">
    <location>
        <begin position="90"/>
        <end position="207"/>
    </location>
</feature>
<feature type="disulfide bond" evidence="1">
    <location>
        <begin position="250"/>
        <end position="281"/>
    </location>
</feature>
<feature type="disulfide bond" evidence="1">
    <location>
        <begin position="292"/>
        <end position="322"/>
    </location>
</feature>